<accession>G2TRL5</accession>
<proteinExistence type="evidence at transcript level"/>
<feature type="chain" id="PRO_0000416503" description="Uncharacterized protein new2">
    <location>
        <begin position="1"/>
        <end position="95"/>
    </location>
</feature>
<protein>
    <recommendedName>
        <fullName>Uncharacterized protein new2</fullName>
    </recommendedName>
</protein>
<keyword id="KW-1185">Reference proteome</keyword>
<reference key="1">
    <citation type="journal article" date="2002" name="Nature">
        <title>The genome sequence of Schizosaccharomyces pombe.</title>
        <authorList>
            <person name="Wood V."/>
            <person name="Gwilliam R."/>
            <person name="Rajandream M.A."/>
            <person name="Lyne M.H."/>
            <person name="Lyne R."/>
            <person name="Stewart A."/>
            <person name="Sgouros J.G."/>
            <person name="Peat N."/>
            <person name="Hayles J."/>
            <person name="Baker S.G."/>
            <person name="Basham D."/>
            <person name="Bowman S."/>
            <person name="Brooks K."/>
            <person name="Brown D."/>
            <person name="Brown S."/>
            <person name="Chillingworth T."/>
            <person name="Churcher C.M."/>
            <person name="Collins M."/>
            <person name="Connor R."/>
            <person name="Cronin A."/>
            <person name="Davis P."/>
            <person name="Feltwell T."/>
            <person name="Fraser A."/>
            <person name="Gentles S."/>
            <person name="Goble A."/>
            <person name="Hamlin N."/>
            <person name="Harris D.E."/>
            <person name="Hidalgo J."/>
            <person name="Hodgson G."/>
            <person name="Holroyd S."/>
            <person name="Hornsby T."/>
            <person name="Howarth S."/>
            <person name="Huckle E.J."/>
            <person name="Hunt S."/>
            <person name="Jagels K."/>
            <person name="James K.D."/>
            <person name="Jones L."/>
            <person name="Jones M."/>
            <person name="Leather S."/>
            <person name="McDonald S."/>
            <person name="McLean J."/>
            <person name="Mooney P."/>
            <person name="Moule S."/>
            <person name="Mungall K.L."/>
            <person name="Murphy L.D."/>
            <person name="Niblett D."/>
            <person name="Odell C."/>
            <person name="Oliver K."/>
            <person name="O'Neil S."/>
            <person name="Pearson D."/>
            <person name="Quail M.A."/>
            <person name="Rabbinowitsch E."/>
            <person name="Rutherford K.M."/>
            <person name="Rutter S."/>
            <person name="Saunders D."/>
            <person name="Seeger K."/>
            <person name="Sharp S."/>
            <person name="Skelton J."/>
            <person name="Simmonds M.N."/>
            <person name="Squares R."/>
            <person name="Squares S."/>
            <person name="Stevens K."/>
            <person name="Taylor K."/>
            <person name="Taylor R.G."/>
            <person name="Tivey A."/>
            <person name="Walsh S.V."/>
            <person name="Warren T."/>
            <person name="Whitehead S."/>
            <person name="Woodward J.R."/>
            <person name="Volckaert G."/>
            <person name="Aert R."/>
            <person name="Robben J."/>
            <person name="Grymonprez B."/>
            <person name="Weltjens I."/>
            <person name="Vanstreels E."/>
            <person name="Rieger M."/>
            <person name="Schaefer M."/>
            <person name="Mueller-Auer S."/>
            <person name="Gabel C."/>
            <person name="Fuchs M."/>
            <person name="Duesterhoeft A."/>
            <person name="Fritzc C."/>
            <person name="Holzer E."/>
            <person name="Moestl D."/>
            <person name="Hilbert H."/>
            <person name="Borzym K."/>
            <person name="Langer I."/>
            <person name="Beck A."/>
            <person name="Lehrach H."/>
            <person name="Reinhardt R."/>
            <person name="Pohl T.M."/>
            <person name="Eger P."/>
            <person name="Zimmermann W."/>
            <person name="Wedler H."/>
            <person name="Wambutt R."/>
            <person name="Purnelle B."/>
            <person name="Goffeau A."/>
            <person name="Cadieu E."/>
            <person name="Dreano S."/>
            <person name="Gloux S."/>
            <person name="Lelaure V."/>
            <person name="Mottier S."/>
            <person name="Galibert F."/>
            <person name="Aves S.J."/>
            <person name="Xiang Z."/>
            <person name="Hunt C."/>
            <person name="Moore K."/>
            <person name="Hurst S.M."/>
            <person name="Lucas M."/>
            <person name="Rochet M."/>
            <person name="Gaillardin C."/>
            <person name="Tallada V.A."/>
            <person name="Garzon A."/>
            <person name="Thode G."/>
            <person name="Daga R.R."/>
            <person name="Cruzado L."/>
            <person name="Jimenez J."/>
            <person name="Sanchez M."/>
            <person name="del Rey F."/>
            <person name="Benito J."/>
            <person name="Dominguez A."/>
            <person name="Revuelta J.L."/>
            <person name="Moreno S."/>
            <person name="Armstrong J."/>
            <person name="Forsburg S.L."/>
            <person name="Cerutti L."/>
            <person name="Lowe T."/>
            <person name="McCombie W.R."/>
            <person name="Paulsen I."/>
            <person name="Potashkin J."/>
            <person name="Shpakovski G.V."/>
            <person name="Ussery D."/>
            <person name="Barrell B.G."/>
            <person name="Nurse P."/>
        </authorList>
    </citation>
    <scope>NUCLEOTIDE SEQUENCE [LARGE SCALE GENOMIC DNA]</scope>
    <source>
        <strain>972 / ATCC 24843</strain>
    </source>
</reference>
<reference key="2">
    <citation type="journal article" date="2011" name="Science">
        <title>Comparative functional genomics of the fission yeasts.</title>
        <authorList>
            <person name="Rhind N."/>
            <person name="Chen Z."/>
            <person name="Yassour M."/>
            <person name="Thompson D.A."/>
            <person name="Haas B.J."/>
            <person name="Habib N."/>
            <person name="Wapinski I."/>
            <person name="Roy S."/>
            <person name="Lin M.F."/>
            <person name="Heiman D.I."/>
            <person name="Young S.K."/>
            <person name="Furuya K."/>
            <person name="Guo Y."/>
            <person name="Pidoux A."/>
            <person name="Chen H.M."/>
            <person name="Robbertse B."/>
            <person name="Goldberg J.M."/>
            <person name="Aoki K."/>
            <person name="Bayne E.H."/>
            <person name="Berlin A.M."/>
            <person name="Desjardins C.A."/>
            <person name="Dobbs E."/>
            <person name="Dukaj L."/>
            <person name="Fan L."/>
            <person name="FitzGerald M.G."/>
            <person name="French C."/>
            <person name="Gujja S."/>
            <person name="Hansen K."/>
            <person name="Keifenheim D."/>
            <person name="Levin J.Z."/>
            <person name="Mosher R.A."/>
            <person name="Mueller C.A."/>
            <person name="Pfiffner J."/>
            <person name="Priest M."/>
            <person name="Russ C."/>
            <person name="Smialowska A."/>
            <person name="Swoboda P."/>
            <person name="Sykes S.M."/>
            <person name="Vaughn M."/>
            <person name="Vengrova S."/>
            <person name="Yoder R."/>
            <person name="Zeng Q."/>
            <person name="Allshire R."/>
            <person name="Baulcombe D."/>
            <person name="Birren B.W."/>
            <person name="Brown W."/>
            <person name="Ekwall K."/>
            <person name="Kellis M."/>
            <person name="Leatherwood J."/>
            <person name="Levin H."/>
            <person name="Margalit H."/>
            <person name="Martienssen R."/>
            <person name="Nieduszynski C.A."/>
            <person name="Spatafora J.W."/>
            <person name="Friedman N."/>
            <person name="Dalgaard J.Z."/>
            <person name="Baumann P."/>
            <person name="Niki H."/>
            <person name="Regev A."/>
            <person name="Nusbaum C."/>
        </authorList>
    </citation>
    <scope>IDENTIFICATION</scope>
</reference>
<reference key="3">
    <citation type="journal article" date="2011" name="Genetics">
        <title>Augmented annotation of the Schizosaccharomyces pombe genome reveals additional genes required for growth and viability.</title>
        <authorList>
            <person name="Bitton D.A."/>
            <person name="Wood V."/>
            <person name="Scutt P.J."/>
            <person name="Grallert A."/>
            <person name="Yates T."/>
            <person name="Smith D.L."/>
            <person name="Hagan I.M."/>
            <person name="Miller C.J."/>
        </authorList>
    </citation>
    <scope>IDENTIFICATION</scope>
</reference>
<dbReference type="EMBL" id="CU329670">
    <property type="protein sequence ID" value="CCD31320.1"/>
    <property type="molecule type" value="Genomic_DNA"/>
</dbReference>
<dbReference type="RefSeq" id="XP_004001775.1">
    <property type="nucleotide sequence ID" value="XM_004001726.1"/>
</dbReference>
<dbReference type="SMR" id="G2TRL5"/>
<dbReference type="STRING" id="284812.G2TRL5"/>
<dbReference type="iPTMnet" id="G2TRL5"/>
<dbReference type="PaxDb" id="4896-SPAC1805.18.1"/>
<dbReference type="EnsemblFungi" id="SPAC1805.18.1">
    <property type="protein sequence ID" value="SPAC1805.18.1:pep"/>
    <property type="gene ID" value="SPAC1805.18"/>
</dbReference>
<dbReference type="PomBase" id="SPAC1805.18">
    <property type="gene designation" value="new2"/>
</dbReference>
<dbReference type="VEuPathDB" id="FungiDB:SPAC1805.18"/>
<dbReference type="HOGENOM" id="CLU_2238173_0_0_1"/>
<dbReference type="InParanoid" id="G2TRL5"/>
<dbReference type="OMA" id="MMIISER"/>
<dbReference type="PRO" id="PR:G2TRL5"/>
<dbReference type="Proteomes" id="UP000002485">
    <property type="component" value="Chromosome I"/>
</dbReference>
<dbReference type="GO" id="GO:0005655">
    <property type="term" value="C:nucleolar ribonuclease P complex"/>
    <property type="evidence" value="ECO:0000266"/>
    <property type="project" value="PomBase"/>
</dbReference>
<dbReference type="GO" id="GO:0000172">
    <property type="term" value="C:ribonuclease MRP complex"/>
    <property type="evidence" value="ECO:0000266"/>
    <property type="project" value="PomBase"/>
</dbReference>
<dbReference type="GO" id="GO:0034965">
    <property type="term" value="P:intronic box C/D snoRNA processing"/>
    <property type="evidence" value="ECO:0000266"/>
    <property type="project" value="PomBase"/>
</dbReference>
<dbReference type="GO" id="GO:0006364">
    <property type="term" value="P:rRNA processing"/>
    <property type="evidence" value="ECO:0000266"/>
    <property type="project" value="PomBase"/>
</dbReference>
<dbReference type="GO" id="GO:0008033">
    <property type="term" value="P:tRNA processing"/>
    <property type="evidence" value="ECO:0000266"/>
    <property type="project" value="PomBase"/>
</dbReference>
<name>NEW2_SCHPO</name>
<organism>
    <name type="scientific">Schizosaccharomyces pombe (strain 972 / ATCC 24843)</name>
    <name type="common">Fission yeast</name>
    <dbReference type="NCBI Taxonomy" id="284812"/>
    <lineage>
        <taxon>Eukaryota</taxon>
        <taxon>Fungi</taxon>
        <taxon>Dikarya</taxon>
        <taxon>Ascomycota</taxon>
        <taxon>Taphrinomycotina</taxon>
        <taxon>Schizosaccharomycetes</taxon>
        <taxon>Schizosaccharomycetales</taxon>
        <taxon>Schizosaccharomycetaceae</taxon>
        <taxon>Schizosaccharomyces</taxon>
    </lineage>
</organism>
<sequence>MIIEKSINAKQLSLKLWDSFVKEKQVSFVAEGDATVKLVSLVELLKRRCNEQKIPFNQTIELIPSEEQSSDTLIHGNRRSLPQLKIDLQILEHDS</sequence>
<gene>
    <name type="primary">new2</name>
    <name type="ORF">SPAC1805.18</name>
</gene>